<reference key="1">
    <citation type="submission" date="2008-10" db="EMBL/GenBank/DDBJ databases">
        <title>Genome sequence of Bacillus cereus AH187.</title>
        <authorList>
            <person name="Dodson R.J."/>
            <person name="Durkin A.S."/>
            <person name="Rosovitz M.J."/>
            <person name="Rasko D.A."/>
            <person name="Kolsto A.B."/>
            <person name="Okstad O.A."/>
            <person name="Ravel J."/>
            <person name="Sutton G."/>
        </authorList>
    </citation>
    <scope>NUCLEOTIDE SEQUENCE [LARGE SCALE GENOMIC DNA]</scope>
    <source>
        <strain>AH187</strain>
    </source>
</reference>
<proteinExistence type="inferred from homology"/>
<protein>
    <recommendedName>
        <fullName evidence="1">NADH-quinone oxidoreductase subunit H</fullName>
        <ecNumber evidence="1">7.1.1.-</ecNumber>
    </recommendedName>
    <alternativeName>
        <fullName evidence="1">NADH dehydrogenase I subunit H</fullName>
    </alternativeName>
    <alternativeName>
        <fullName evidence="1">NDH-1 subunit H</fullName>
    </alternativeName>
</protein>
<dbReference type="EC" id="7.1.1.-" evidence="1"/>
<dbReference type="EMBL" id="CP001177">
    <property type="protein sequence ID" value="ACJ81677.1"/>
    <property type="molecule type" value="Genomic_DNA"/>
</dbReference>
<dbReference type="SMR" id="B7HY54"/>
<dbReference type="KEGG" id="bcr:BCAH187_A5472"/>
<dbReference type="HOGENOM" id="CLU_015134_0_1_9"/>
<dbReference type="Proteomes" id="UP000002214">
    <property type="component" value="Chromosome"/>
</dbReference>
<dbReference type="GO" id="GO:0005886">
    <property type="term" value="C:plasma membrane"/>
    <property type="evidence" value="ECO:0007669"/>
    <property type="project" value="UniProtKB-SubCell"/>
</dbReference>
<dbReference type="GO" id="GO:0003954">
    <property type="term" value="F:NADH dehydrogenase activity"/>
    <property type="evidence" value="ECO:0007669"/>
    <property type="project" value="TreeGrafter"/>
</dbReference>
<dbReference type="GO" id="GO:0016655">
    <property type="term" value="F:oxidoreductase activity, acting on NAD(P)H, quinone or similar compound as acceptor"/>
    <property type="evidence" value="ECO:0007669"/>
    <property type="project" value="UniProtKB-UniRule"/>
</dbReference>
<dbReference type="GO" id="GO:0048038">
    <property type="term" value="F:quinone binding"/>
    <property type="evidence" value="ECO:0007669"/>
    <property type="project" value="UniProtKB-KW"/>
</dbReference>
<dbReference type="GO" id="GO:0009060">
    <property type="term" value="P:aerobic respiration"/>
    <property type="evidence" value="ECO:0007669"/>
    <property type="project" value="TreeGrafter"/>
</dbReference>
<dbReference type="HAMAP" id="MF_01350">
    <property type="entry name" value="NDH1_NuoH"/>
    <property type="match status" value="1"/>
</dbReference>
<dbReference type="InterPro" id="IPR001694">
    <property type="entry name" value="NADH_UbQ_OxRdtase_su1/FPO"/>
</dbReference>
<dbReference type="InterPro" id="IPR018086">
    <property type="entry name" value="NADH_UbQ_OxRdtase_su1_CS"/>
</dbReference>
<dbReference type="NCBIfam" id="NF004741">
    <property type="entry name" value="PRK06076.1-2"/>
    <property type="match status" value="1"/>
</dbReference>
<dbReference type="PANTHER" id="PTHR11432">
    <property type="entry name" value="NADH DEHYDROGENASE SUBUNIT 1"/>
    <property type="match status" value="1"/>
</dbReference>
<dbReference type="PANTHER" id="PTHR11432:SF3">
    <property type="entry name" value="NADH-UBIQUINONE OXIDOREDUCTASE CHAIN 1"/>
    <property type="match status" value="1"/>
</dbReference>
<dbReference type="Pfam" id="PF00146">
    <property type="entry name" value="NADHdh"/>
    <property type="match status" value="1"/>
</dbReference>
<dbReference type="PROSITE" id="PS00668">
    <property type="entry name" value="COMPLEX1_ND1_2"/>
    <property type="match status" value="1"/>
</dbReference>
<gene>
    <name evidence="1" type="primary">nuoH</name>
    <name type="ordered locus">BCAH187_A5472</name>
</gene>
<feature type="chain" id="PRO_1000143575" description="NADH-quinone oxidoreductase subunit H">
    <location>
        <begin position="1"/>
        <end position="333"/>
    </location>
</feature>
<feature type="transmembrane region" description="Helical" evidence="1">
    <location>
        <begin position="15"/>
        <end position="35"/>
    </location>
</feature>
<feature type="transmembrane region" description="Helical" evidence="1">
    <location>
        <begin position="88"/>
        <end position="108"/>
    </location>
</feature>
<feature type="transmembrane region" description="Helical" evidence="1">
    <location>
        <begin position="117"/>
        <end position="137"/>
    </location>
</feature>
<feature type="transmembrane region" description="Helical" evidence="1">
    <location>
        <begin position="159"/>
        <end position="179"/>
    </location>
</feature>
<feature type="transmembrane region" description="Helical" evidence="1">
    <location>
        <begin position="191"/>
        <end position="211"/>
    </location>
</feature>
<feature type="transmembrane region" description="Helical" evidence="1">
    <location>
        <begin position="239"/>
        <end position="259"/>
    </location>
</feature>
<feature type="transmembrane region" description="Helical" evidence="1">
    <location>
        <begin position="274"/>
        <end position="296"/>
    </location>
</feature>
<feature type="transmembrane region" description="Helical" evidence="1">
    <location>
        <begin position="313"/>
        <end position="333"/>
    </location>
</feature>
<organism>
    <name type="scientific">Bacillus cereus (strain AH187)</name>
    <dbReference type="NCBI Taxonomy" id="405534"/>
    <lineage>
        <taxon>Bacteria</taxon>
        <taxon>Bacillati</taxon>
        <taxon>Bacillota</taxon>
        <taxon>Bacilli</taxon>
        <taxon>Bacillales</taxon>
        <taxon>Bacillaceae</taxon>
        <taxon>Bacillus</taxon>
        <taxon>Bacillus cereus group</taxon>
    </lineage>
</organism>
<name>NUOH_BACC7</name>
<comment type="function">
    <text evidence="1">NDH-1 shuttles electrons from NADH, via FMN and iron-sulfur (Fe-S) centers, to quinones in the respiratory chain. The immediate electron acceptor for the enzyme in this species is believed to be ubiquinone. Couples the redox reaction to proton translocation (for every two electrons transferred, four hydrogen ions are translocated across the cytoplasmic membrane), and thus conserves the redox energy in a proton gradient. This subunit may bind ubiquinone.</text>
</comment>
<comment type="catalytic activity">
    <reaction evidence="1">
        <text>a quinone + NADH + 5 H(+)(in) = a quinol + NAD(+) + 4 H(+)(out)</text>
        <dbReference type="Rhea" id="RHEA:57888"/>
        <dbReference type="ChEBI" id="CHEBI:15378"/>
        <dbReference type="ChEBI" id="CHEBI:24646"/>
        <dbReference type="ChEBI" id="CHEBI:57540"/>
        <dbReference type="ChEBI" id="CHEBI:57945"/>
        <dbReference type="ChEBI" id="CHEBI:132124"/>
    </reaction>
</comment>
<comment type="subunit">
    <text evidence="1">NDH-1 is composed of 14 different subunits. Subunits NuoA, H, J, K, L, M, N constitute the membrane sector of the complex.</text>
</comment>
<comment type="subcellular location">
    <subcellularLocation>
        <location evidence="1">Cell membrane</location>
        <topology evidence="1">Multi-pass membrane protein</topology>
    </subcellularLocation>
</comment>
<comment type="similarity">
    <text evidence="1">Belongs to the complex I subunit 1 family.</text>
</comment>
<keyword id="KW-1003">Cell membrane</keyword>
<keyword id="KW-0472">Membrane</keyword>
<keyword id="KW-0520">NAD</keyword>
<keyword id="KW-0874">Quinone</keyword>
<keyword id="KW-1278">Translocase</keyword>
<keyword id="KW-0812">Transmembrane</keyword>
<keyword id="KW-1133">Transmembrane helix</keyword>
<keyword id="KW-0830">Ubiquinone</keyword>
<accession>B7HY54</accession>
<sequence>MIETLLQSPSSWTNFFIFFGLAVLLLFAVLGFVTYGILAERKVMGFMQGRIGPNQVGGRFGLLQTVADVLKLLLKEDSIPKAADKPLFILAPVIAFAPAFMVLAVIPFTDKFQFADIGVGLLYYIAVSGITTIGVVTGGWASNNKYSLLGGMRAAAQMISYEIPLVMSVIGIVLLAGSLNLNEIVAAQENVWYIFVQPIGFVVFLIAAVAELNRTPFDLPEAESELVSGYHTEYSGFRWAFFMLSEYVYFFGMASLITVLFLGGWNPVMFLGFIPGAVWFALKFSSVVFLLIWFRVTFPRIRGDQLMEFGWKVLLPIALANIFLTALIKELFF</sequence>
<evidence type="ECO:0000255" key="1">
    <source>
        <dbReference type="HAMAP-Rule" id="MF_01350"/>
    </source>
</evidence>